<keyword id="KW-0687">Ribonucleoprotein</keyword>
<keyword id="KW-0689">Ribosomal protein</keyword>
<keyword id="KW-0694">RNA-binding</keyword>
<keyword id="KW-0699">rRNA-binding</keyword>
<sequence length="123" mass="13404">MENSLFKKSEKKVRRALRVRKVLRGSSLKPRLSVVKTNKHIYVQLIDDSIGKTLASVSTIAKSSKAAGLVKKNQGVAKALGVQIAEIGKSLQVDRVVFDRGPFKYHGIIAMVADGAREGGLQF</sequence>
<proteinExistence type="inferred from homology"/>
<dbReference type="EMBL" id="CR848038">
    <property type="protein sequence ID" value="CAH63565.1"/>
    <property type="molecule type" value="Genomic_DNA"/>
</dbReference>
<dbReference type="RefSeq" id="WP_006343778.1">
    <property type="nucleotide sequence ID" value="NC_004552.2"/>
</dbReference>
<dbReference type="SMR" id="Q5L705"/>
<dbReference type="KEGG" id="cab:CAB107"/>
<dbReference type="eggNOG" id="COG0256">
    <property type="taxonomic scope" value="Bacteria"/>
</dbReference>
<dbReference type="HOGENOM" id="CLU_098841_0_1_0"/>
<dbReference type="OrthoDB" id="9810939at2"/>
<dbReference type="Proteomes" id="UP000001012">
    <property type="component" value="Chromosome"/>
</dbReference>
<dbReference type="GO" id="GO:0022625">
    <property type="term" value="C:cytosolic large ribosomal subunit"/>
    <property type="evidence" value="ECO:0007669"/>
    <property type="project" value="TreeGrafter"/>
</dbReference>
<dbReference type="GO" id="GO:0008097">
    <property type="term" value="F:5S rRNA binding"/>
    <property type="evidence" value="ECO:0007669"/>
    <property type="project" value="TreeGrafter"/>
</dbReference>
<dbReference type="GO" id="GO:0003735">
    <property type="term" value="F:structural constituent of ribosome"/>
    <property type="evidence" value="ECO:0007669"/>
    <property type="project" value="InterPro"/>
</dbReference>
<dbReference type="GO" id="GO:0006412">
    <property type="term" value="P:translation"/>
    <property type="evidence" value="ECO:0007669"/>
    <property type="project" value="UniProtKB-UniRule"/>
</dbReference>
<dbReference type="CDD" id="cd00432">
    <property type="entry name" value="Ribosomal_L18_L5e"/>
    <property type="match status" value="1"/>
</dbReference>
<dbReference type="FunFam" id="3.30.420.100:FF:000001">
    <property type="entry name" value="50S ribosomal protein L18"/>
    <property type="match status" value="1"/>
</dbReference>
<dbReference type="Gene3D" id="3.30.420.100">
    <property type="match status" value="1"/>
</dbReference>
<dbReference type="HAMAP" id="MF_01337_B">
    <property type="entry name" value="Ribosomal_uL18_B"/>
    <property type="match status" value="1"/>
</dbReference>
<dbReference type="InterPro" id="IPR004389">
    <property type="entry name" value="Ribosomal_uL18_bac-type"/>
</dbReference>
<dbReference type="InterPro" id="IPR005484">
    <property type="entry name" value="Ribosomal_uL18_bac/euk"/>
</dbReference>
<dbReference type="NCBIfam" id="TIGR00060">
    <property type="entry name" value="L18_bact"/>
    <property type="match status" value="1"/>
</dbReference>
<dbReference type="PANTHER" id="PTHR12899">
    <property type="entry name" value="39S RIBOSOMAL PROTEIN L18, MITOCHONDRIAL"/>
    <property type="match status" value="1"/>
</dbReference>
<dbReference type="PANTHER" id="PTHR12899:SF3">
    <property type="entry name" value="LARGE RIBOSOMAL SUBUNIT PROTEIN UL18M"/>
    <property type="match status" value="1"/>
</dbReference>
<dbReference type="Pfam" id="PF00861">
    <property type="entry name" value="Ribosomal_L18p"/>
    <property type="match status" value="1"/>
</dbReference>
<dbReference type="SUPFAM" id="SSF53137">
    <property type="entry name" value="Translational machinery components"/>
    <property type="match status" value="1"/>
</dbReference>
<feature type="chain" id="PRO_0000131241" description="Large ribosomal subunit protein uL18">
    <location>
        <begin position="1"/>
        <end position="123"/>
    </location>
</feature>
<evidence type="ECO:0000255" key="1">
    <source>
        <dbReference type="HAMAP-Rule" id="MF_01337"/>
    </source>
</evidence>
<evidence type="ECO:0000305" key="2"/>
<accession>Q5L705</accession>
<protein>
    <recommendedName>
        <fullName evidence="1">Large ribosomal subunit protein uL18</fullName>
    </recommendedName>
    <alternativeName>
        <fullName evidence="2">50S ribosomal protein L18</fullName>
    </alternativeName>
</protein>
<gene>
    <name evidence="1" type="primary">rplR</name>
    <name type="ordered locus">CAB107</name>
</gene>
<organism>
    <name type="scientific">Chlamydia abortus (strain DSM 27085 / S26/3)</name>
    <name type="common">Chlamydophila abortus</name>
    <dbReference type="NCBI Taxonomy" id="218497"/>
    <lineage>
        <taxon>Bacteria</taxon>
        <taxon>Pseudomonadati</taxon>
        <taxon>Chlamydiota</taxon>
        <taxon>Chlamydiia</taxon>
        <taxon>Chlamydiales</taxon>
        <taxon>Chlamydiaceae</taxon>
        <taxon>Chlamydia/Chlamydophila group</taxon>
        <taxon>Chlamydia</taxon>
    </lineage>
</organism>
<comment type="function">
    <text evidence="1">This is one of the proteins that bind and probably mediate the attachment of the 5S RNA into the large ribosomal subunit, where it forms part of the central protuberance.</text>
</comment>
<comment type="subunit">
    <text evidence="1">Part of the 50S ribosomal subunit; part of the 5S rRNA/L5/L18/L25 subcomplex. Contacts the 5S and 23S rRNAs.</text>
</comment>
<comment type="similarity">
    <text evidence="1">Belongs to the universal ribosomal protein uL18 family.</text>
</comment>
<name>RL18_CHLAB</name>
<reference key="1">
    <citation type="journal article" date="2005" name="Genome Res.">
        <title>The Chlamydophila abortus genome sequence reveals an array of variable proteins that contribute to interspecies variation.</title>
        <authorList>
            <person name="Thomson N.R."/>
            <person name="Yeats C."/>
            <person name="Bell K."/>
            <person name="Holden M.T.G."/>
            <person name="Bentley S.D."/>
            <person name="Livingstone M."/>
            <person name="Cerdeno-Tarraga A.-M."/>
            <person name="Harris B."/>
            <person name="Doggett J."/>
            <person name="Ormond D."/>
            <person name="Mungall K."/>
            <person name="Clarke K."/>
            <person name="Feltwell T."/>
            <person name="Hance Z."/>
            <person name="Sanders M."/>
            <person name="Quail M.A."/>
            <person name="Price C."/>
            <person name="Barrell B.G."/>
            <person name="Parkhill J."/>
            <person name="Longbottom D."/>
        </authorList>
    </citation>
    <scope>NUCLEOTIDE SEQUENCE [LARGE SCALE GENOMIC DNA]</scope>
    <source>
        <strain>DSM 27085 / S26/3</strain>
    </source>
</reference>